<reference key="1">
    <citation type="journal article" date="2010" name="ISME J.">
        <title>The complete genome sequence of the algal symbiont Dinoroseobacter shibae: a hitchhiker's guide to life in the sea.</title>
        <authorList>
            <person name="Wagner-Dobler I."/>
            <person name="Ballhausen B."/>
            <person name="Berger M."/>
            <person name="Brinkhoff T."/>
            <person name="Buchholz I."/>
            <person name="Bunk B."/>
            <person name="Cypionka H."/>
            <person name="Daniel R."/>
            <person name="Drepper T."/>
            <person name="Gerdts G."/>
            <person name="Hahnke S."/>
            <person name="Han C."/>
            <person name="Jahn D."/>
            <person name="Kalhoefer D."/>
            <person name="Kiss H."/>
            <person name="Klenk H.P."/>
            <person name="Kyrpides N."/>
            <person name="Liebl W."/>
            <person name="Liesegang H."/>
            <person name="Meincke L."/>
            <person name="Pati A."/>
            <person name="Petersen J."/>
            <person name="Piekarski T."/>
            <person name="Pommerenke C."/>
            <person name="Pradella S."/>
            <person name="Pukall R."/>
            <person name="Rabus R."/>
            <person name="Stackebrandt E."/>
            <person name="Thole S."/>
            <person name="Thompson L."/>
            <person name="Tielen P."/>
            <person name="Tomasch J."/>
            <person name="von Jan M."/>
            <person name="Wanphrut N."/>
            <person name="Wichels A."/>
            <person name="Zech H."/>
            <person name="Simon M."/>
        </authorList>
    </citation>
    <scope>NUCLEOTIDE SEQUENCE [LARGE SCALE GENOMIC DNA]</scope>
    <source>
        <strain>DSM 16493 / NCIMB 14021 / DFL 12</strain>
    </source>
</reference>
<comment type="function">
    <text evidence="1">Catalyzes the synthesis of GMP from XMP.</text>
</comment>
<comment type="catalytic activity">
    <reaction evidence="1">
        <text>XMP + L-glutamine + ATP + H2O = GMP + L-glutamate + AMP + diphosphate + 2 H(+)</text>
        <dbReference type="Rhea" id="RHEA:11680"/>
        <dbReference type="ChEBI" id="CHEBI:15377"/>
        <dbReference type="ChEBI" id="CHEBI:15378"/>
        <dbReference type="ChEBI" id="CHEBI:29985"/>
        <dbReference type="ChEBI" id="CHEBI:30616"/>
        <dbReference type="ChEBI" id="CHEBI:33019"/>
        <dbReference type="ChEBI" id="CHEBI:57464"/>
        <dbReference type="ChEBI" id="CHEBI:58115"/>
        <dbReference type="ChEBI" id="CHEBI:58359"/>
        <dbReference type="ChEBI" id="CHEBI:456215"/>
        <dbReference type="EC" id="6.3.5.2"/>
    </reaction>
</comment>
<comment type="pathway">
    <text evidence="1">Purine metabolism; GMP biosynthesis; GMP from XMP (L-Gln route): step 1/1.</text>
</comment>
<comment type="subunit">
    <text evidence="1">Homodimer.</text>
</comment>
<protein>
    <recommendedName>
        <fullName evidence="1">GMP synthase [glutamine-hydrolyzing]</fullName>
        <ecNumber evidence="1">6.3.5.2</ecNumber>
    </recommendedName>
    <alternativeName>
        <fullName evidence="1">GMP synthetase</fullName>
    </alternativeName>
    <alternativeName>
        <fullName evidence="1">Glutamine amidotransferase</fullName>
    </alternativeName>
</protein>
<accession>A8LKW5</accession>
<feature type="chain" id="PRO_1000120277" description="GMP synthase [glutamine-hydrolyzing]">
    <location>
        <begin position="1"/>
        <end position="520"/>
    </location>
</feature>
<feature type="domain" description="Glutamine amidotransferase type-1" evidence="1">
    <location>
        <begin position="8"/>
        <end position="202"/>
    </location>
</feature>
<feature type="domain" description="GMPS ATP-PPase" evidence="1">
    <location>
        <begin position="203"/>
        <end position="395"/>
    </location>
</feature>
<feature type="active site" description="Nucleophile" evidence="1">
    <location>
        <position position="86"/>
    </location>
</feature>
<feature type="active site" evidence="1">
    <location>
        <position position="177"/>
    </location>
</feature>
<feature type="active site" evidence="1">
    <location>
        <position position="179"/>
    </location>
</feature>
<feature type="binding site" evidence="1">
    <location>
        <begin position="230"/>
        <end position="236"/>
    </location>
    <ligand>
        <name>ATP</name>
        <dbReference type="ChEBI" id="CHEBI:30616"/>
    </ligand>
</feature>
<organism>
    <name type="scientific">Dinoroseobacter shibae (strain DSM 16493 / NCIMB 14021 / DFL 12)</name>
    <dbReference type="NCBI Taxonomy" id="398580"/>
    <lineage>
        <taxon>Bacteria</taxon>
        <taxon>Pseudomonadati</taxon>
        <taxon>Pseudomonadota</taxon>
        <taxon>Alphaproteobacteria</taxon>
        <taxon>Rhodobacterales</taxon>
        <taxon>Roseobacteraceae</taxon>
        <taxon>Dinoroseobacter</taxon>
    </lineage>
</organism>
<name>GUAA_DINSH</name>
<gene>
    <name evidence="1" type="primary">guaA</name>
    <name type="ordered locus">Dshi_1587</name>
</gene>
<evidence type="ECO:0000255" key="1">
    <source>
        <dbReference type="HAMAP-Rule" id="MF_00344"/>
    </source>
</evidence>
<dbReference type="EC" id="6.3.5.2" evidence="1"/>
<dbReference type="EMBL" id="CP000830">
    <property type="protein sequence ID" value="ABV93329.1"/>
    <property type="molecule type" value="Genomic_DNA"/>
</dbReference>
<dbReference type="RefSeq" id="WP_012178259.1">
    <property type="nucleotide sequence ID" value="NC_009952.1"/>
</dbReference>
<dbReference type="SMR" id="A8LKW5"/>
<dbReference type="STRING" id="398580.Dshi_1587"/>
<dbReference type="MEROPS" id="C26.957"/>
<dbReference type="KEGG" id="dsh:Dshi_1587"/>
<dbReference type="eggNOG" id="COG0518">
    <property type="taxonomic scope" value="Bacteria"/>
</dbReference>
<dbReference type="eggNOG" id="COG0519">
    <property type="taxonomic scope" value="Bacteria"/>
</dbReference>
<dbReference type="HOGENOM" id="CLU_014340_0_5_5"/>
<dbReference type="OrthoDB" id="9802219at2"/>
<dbReference type="UniPathway" id="UPA00189">
    <property type="reaction ID" value="UER00296"/>
</dbReference>
<dbReference type="Proteomes" id="UP000006833">
    <property type="component" value="Chromosome"/>
</dbReference>
<dbReference type="GO" id="GO:0005829">
    <property type="term" value="C:cytosol"/>
    <property type="evidence" value="ECO:0007669"/>
    <property type="project" value="TreeGrafter"/>
</dbReference>
<dbReference type="GO" id="GO:0005524">
    <property type="term" value="F:ATP binding"/>
    <property type="evidence" value="ECO:0007669"/>
    <property type="project" value="UniProtKB-UniRule"/>
</dbReference>
<dbReference type="GO" id="GO:0003921">
    <property type="term" value="F:GMP synthase activity"/>
    <property type="evidence" value="ECO:0007669"/>
    <property type="project" value="InterPro"/>
</dbReference>
<dbReference type="CDD" id="cd01742">
    <property type="entry name" value="GATase1_GMP_Synthase"/>
    <property type="match status" value="1"/>
</dbReference>
<dbReference type="CDD" id="cd01997">
    <property type="entry name" value="GMP_synthase_C"/>
    <property type="match status" value="1"/>
</dbReference>
<dbReference type="FunFam" id="3.30.300.10:FF:000002">
    <property type="entry name" value="GMP synthase [glutamine-hydrolyzing]"/>
    <property type="match status" value="1"/>
</dbReference>
<dbReference type="FunFam" id="3.40.50.620:FF:000001">
    <property type="entry name" value="GMP synthase [glutamine-hydrolyzing]"/>
    <property type="match status" value="1"/>
</dbReference>
<dbReference type="Gene3D" id="3.30.300.10">
    <property type="match status" value="1"/>
</dbReference>
<dbReference type="Gene3D" id="3.40.50.880">
    <property type="match status" value="1"/>
</dbReference>
<dbReference type="Gene3D" id="3.40.50.620">
    <property type="entry name" value="HUPs"/>
    <property type="match status" value="1"/>
</dbReference>
<dbReference type="HAMAP" id="MF_00344">
    <property type="entry name" value="GMP_synthase"/>
    <property type="match status" value="1"/>
</dbReference>
<dbReference type="InterPro" id="IPR029062">
    <property type="entry name" value="Class_I_gatase-like"/>
</dbReference>
<dbReference type="InterPro" id="IPR017926">
    <property type="entry name" value="GATASE"/>
</dbReference>
<dbReference type="InterPro" id="IPR001674">
    <property type="entry name" value="GMP_synth_C"/>
</dbReference>
<dbReference type="InterPro" id="IPR004739">
    <property type="entry name" value="GMP_synth_GATase"/>
</dbReference>
<dbReference type="InterPro" id="IPR022955">
    <property type="entry name" value="GMP_synthase"/>
</dbReference>
<dbReference type="InterPro" id="IPR025777">
    <property type="entry name" value="GMPS_ATP_PPase_dom"/>
</dbReference>
<dbReference type="InterPro" id="IPR014729">
    <property type="entry name" value="Rossmann-like_a/b/a_fold"/>
</dbReference>
<dbReference type="NCBIfam" id="TIGR00884">
    <property type="entry name" value="guaA_Cterm"/>
    <property type="match status" value="1"/>
</dbReference>
<dbReference type="NCBIfam" id="TIGR00888">
    <property type="entry name" value="guaA_Nterm"/>
    <property type="match status" value="1"/>
</dbReference>
<dbReference type="NCBIfam" id="NF000848">
    <property type="entry name" value="PRK00074.1"/>
    <property type="match status" value="1"/>
</dbReference>
<dbReference type="PANTHER" id="PTHR11922:SF2">
    <property type="entry name" value="GMP SYNTHASE [GLUTAMINE-HYDROLYZING]"/>
    <property type="match status" value="1"/>
</dbReference>
<dbReference type="PANTHER" id="PTHR11922">
    <property type="entry name" value="GMP SYNTHASE-RELATED"/>
    <property type="match status" value="1"/>
</dbReference>
<dbReference type="Pfam" id="PF00117">
    <property type="entry name" value="GATase"/>
    <property type="match status" value="1"/>
</dbReference>
<dbReference type="Pfam" id="PF00958">
    <property type="entry name" value="GMP_synt_C"/>
    <property type="match status" value="1"/>
</dbReference>
<dbReference type="Pfam" id="PF03054">
    <property type="entry name" value="tRNA_Me_trans"/>
    <property type="match status" value="1"/>
</dbReference>
<dbReference type="PRINTS" id="PR00097">
    <property type="entry name" value="ANTSNTHASEII"/>
</dbReference>
<dbReference type="PRINTS" id="PR00096">
    <property type="entry name" value="GATASE"/>
</dbReference>
<dbReference type="SUPFAM" id="SSF52402">
    <property type="entry name" value="Adenine nucleotide alpha hydrolases-like"/>
    <property type="match status" value="1"/>
</dbReference>
<dbReference type="SUPFAM" id="SSF52317">
    <property type="entry name" value="Class I glutamine amidotransferase-like"/>
    <property type="match status" value="1"/>
</dbReference>
<dbReference type="SUPFAM" id="SSF54810">
    <property type="entry name" value="GMP synthetase C-terminal dimerisation domain"/>
    <property type="match status" value="1"/>
</dbReference>
<dbReference type="PROSITE" id="PS51273">
    <property type="entry name" value="GATASE_TYPE_1"/>
    <property type="match status" value="1"/>
</dbReference>
<dbReference type="PROSITE" id="PS51553">
    <property type="entry name" value="GMPS_ATP_PPASE"/>
    <property type="match status" value="1"/>
</dbReference>
<keyword id="KW-0067">ATP-binding</keyword>
<keyword id="KW-0315">Glutamine amidotransferase</keyword>
<keyword id="KW-0332">GMP biosynthesis</keyword>
<keyword id="KW-0436">Ligase</keyword>
<keyword id="KW-0547">Nucleotide-binding</keyword>
<keyword id="KW-0658">Purine biosynthesis</keyword>
<keyword id="KW-1185">Reference proteome</keyword>
<proteinExistence type="inferred from homology"/>
<sequence>MTQFDHDRLLIIDFGSQVTQLIARRLRELNVFCEIHPFQNVTDAFLADFAPKAVIFSGGPASVIDANSPRPPASVFELGVPILGICYGQQVMMQMLGGMVERGHGTAEFGRAYVTPQGDRPELLNGWFLDGREQVWMSHGDHVSRIAPGFEVYGTSPNAPFAITADLARNFFAVQFHPEVHHTPNGKTLYENFVRLAGFTGDWTMDAYREQAIAEIRAQVGDGKVICALSGGVDSSVAAVLIHEAIGEQLTCVFVDHGLLRKNEAQEVVTMFREHYNLPLIHADETELFLSALDGQSDPETKRKIIGKLFIDVFEAKAKEIGGADFLAQGTLYPDVIESVSFSGGPSVTIKSHHNVGGLPEKMGMKLVEPLRELFKDEVRALGHELGLPASFIGRHPFPGPGLAIRCPGEITRPKLEILREADAVYIDQIRKYGLYDEIWQAYVAILPVRTVGVMGDGRTYDYACALRAVTSVDGMTADYYPFTHEFLGETATRIINEVQGINRVTYDITSKPPGTIEWE</sequence>